<proteinExistence type="inferred from homology"/>
<reference key="1">
    <citation type="journal article" date="2008" name="Genome Res.">
        <title>Insights from the complete genome sequence of Mycobacterium marinum on the evolution of Mycobacterium tuberculosis.</title>
        <authorList>
            <person name="Stinear T.P."/>
            <person name="Seemann T."/>
            <person name="Harrison P.F."/>
            <person name="Jenkin G.A."/>
            <person name="Davies J.K."/>
            <person name="Johnson P.D."/>
            <person name="Abdellah Z."/>
            <person name="Arrowsmith C."/>
            <person name="Chillingworth T."/>
            <person name="Churcher C."/>
            <person name="Clarke K."/>
            <person name="Cronin A."/>
            <person name="Davis P."/>
            <person name="Goodhead I."/>
            <person name="Holroyd N."/>
            <person name="Jagels K."/>
            <person name="Lord A."/>
            <person name="Moule S."/>
            <person name="Mungall K."/>
            <person name="Norbertczak H."/>
            <person name="Quail M.A."/>
            <person name="Rabbinowitsch E."/>
            <person name="Walker D."/>
            <person name="White B."/>
            <person name="Whitehead S."/>
            <person name="Small P.L."/>
            <person name="Brosch R."/>
            <person name="Ramakrishnan L."/>
            <person name="Fischbach M.A."/>
            <person name="Parkhill J."/>
            <person name="Cole S.T."/>
        </authorList>
    </citation>
    <scope>NUCLEOTIDE SEQUENCE [LARGE SCALE GENOMIC DNA]</scope>
    <source>
        <strain>ATCC BAA-535 / M</strain>
    </source>
</reference>
<accession>B2HSZ1</accession>
<protein>
    <recommendedName>
        <fullName evidence="1">Urease subunit beta</fullName>
        <ecNumber evidence="1">3.5.1.5</ecNumber>
    </recommendedName>
    <alternativeName>
        <fullName evidence="1">Urea amidohydrolase subunit beta</fullName>
    </alternativeName>
</protein>
<sequence length="103" mass="11125">MIPGEIHYGRGDIEINTTAQRIEMNVVNTGDRPVQVGSHVHFPQANAALSFDRAAAHGYRLDIPAATAVRFEPGVAHTVSLVPLEGRRAVYGLTLNPPGRLDD</sequence>
<dbReference type="EC" id="3.5.1.5" evidence="1"/>
<dbReference type="EMBL" id="CP000854">
    <property type="protein sequence ID" value="ACC41165.1"/>
    <property type="molecule type" value="Genomic_DNA"/>
</dbReference>
<dbReference type="RefSeq" id="WP_011740894.1">
    <property type="nucleotide sequence ID" value="NC_010612.1"/>
</dbReference>
<dbReference type="SMR" id="B2HSZ1"/>
<dbReference type="STRING" id="216594.MMAR_2723"/>
<dbReference type="GeneID" id="93437147"/>
<dbReference type="KEGG" id="mmi:MMAR_2723"/>
<dbReference type="eggNOG" id="COG0832">
    <property type="taxonomic scope" value="Bacteria"/>
</dbReference>
<dbReference type="HOGENOM" id="CLU_129707_1_1_11"/>
<dbReference type="OrthoDB" id="9797217at2"/>
<dbReference type="UniPathway" id="UPA00258">
    <property type="reaction ID" value="UER00370"/>
</dbReference>
<dbReference type="Proteomes" id="UP000001190">
    <property type="component" value="Chromosome"/>
</dbReference>
<dbReference type="GO" id="GO:0035550">
    <property type="term" value="C:urease complex"/>
    <property type="evidence" value="ECO:0007669"/>
    <property type="project" value="InterPro"/>
</dbReference>
<dbReference type="GO" id="GO:0009039">
    <property type="term" value="F:urease activity"/>
    <property type="evidence" value="ECO:0007669"/>
    <property type="project" value="UniProtKB-UniRule"/>
</dbReference>
<dbReference type="GO" id="GO:0043419">
    <property type="term" value="P:urea catabolic process"/>
    <property type="evidence" value="ECO:0007669"/>
    <property type="project" value="UniProtKB-UniRule"/>
</dbReference>
<dbReference type="CDD" id="cd00407">
    <property type="entry name" value="Urease_beta"/>
    <property type="match status" value="1"/>
</dbReference>
<dbReference type="Gene3D" id="2.10.150.10">
    <property type="entry name" value="Urease, beta subunit"/>
    <property type="match status" value="1"/>
</dbReference>
<dbReference type="HAMAP" id="MF_01954">
    <property type="entry name" value="Urease_beta"/>
    <property type="match status" value="1"/>
</dbReference>
<dbReference type="InterPro" id="IPR002019">
    <property type="entry name" value="Urease_beta-like"/>
</dbReference>
<dbReference type="InterPro" id="IPR036461">
    <property type="entry name" value="Urease_betasu_sf"/>
</dbReference>
<dbReference type="InterPro" id="IPR050069">
    <property type="entry name" value="Urease_subunit"/>
</dbReference>
<dbReference type="NCBIfam" id="NF009682">
    <property type="entry name" value="PRK13203.1"/>
    <property type="match status" value="1"/>
</dbReference>
<dbReference type="NCBIfam" id="TIGR00192">
    <property type="entry name" value="urease_beta"/>
    <property type="match status" value="1"/>
</dbReference>
<dbReference type="PANTHER" id="PTHR33569">
    <property type="entry name" value="UREASE"/>
    <property type="match status" value="1"/>
</dbReference>
<dbReference type="PANTHER" id="PTHR33569:SF1">
    <property type="entry name" value="UREASE"/>
    <property type="match status" value="1"/>
</dbReference>
<dbReference type="Pfam" id="PF00699">
    <property type="entry name" value="Urease_beta"/>
    <property type="match status" value="1"/>
</dbReference>
<dbReference type="SUPFAM" id="SSF51278">
    <property type="entry name" value="Urease, beta-subunit"/>
    <property type="match status" value="1"/>
</dbReference>
<organism>
    <name type="scientific">Mycobacterium marinum (strain ATCC BAA-535 / M)</name>
    <dbReference type="NCBI Taxonomy" id="216594"/>
    <lineage>
        <taxon>Bacteria</taxon>
        <taxon>Bacillati</taxon>
        <taxon>Actinomycetota</taxon>
        <taxon>Actinomycetes</taxon>
        <taxon>Mycobacteriales</taxon>
        <taxon>Mycobacteriaceae</taxon>
        <taxon>Mycobacterium</taxon>
        <taxon>Mycobacterium ulcerans group</taxon>
    </lineage>
</organism>
<feature type="chain" id="PRO_1000188931" description="Urease subunit beta">
    <location>
        <begin position="1"/>
        <end position="103"/>
    </location>
</feature>
<gene>
    <name evidence="1" type="primary">ureB</name>
    <name type="ordered locus">MMAR_2723</name>
</gene>
<comment type="catalytic activity">
    <reaction evidence="1">
        <text>urea + 2 H2O + H(+) = hydrogencarbonate + 2 NH4(+)</text>
        <dbReference type="Rhea" id="RHEA:20557"/>
        <dbReference type="ChEBI" id="CHEBI:15377"/>
        <dbReference type="ChEBI" id="CHEBI:15378"/>
        <dbReference type="ChEBI" id="CHEBI:16199"/>
        <dbReference type="ChEBI" id="CHEBI:17544"/>
        <dbReference type="ChEBI" id="CHEBI:28938"/>
        <dbReference type="EC" id="3.5.1.5"/>
    </reaction>
</comment>
<comment type="pathway">
    <text evidence="1">Nitrogen metabolism; urea degradation; CO(2) and NH(3) from urea (urease route): step 1/1.</text>
</comment>
<comment type="subunit">
    <text evidence="1">Heterotrimer of UreA (gamma), UreB (beta) and UreC (alpha) subunits. Three heterotrimers associate to form the active enzyme.</text>
</comment>
<comment type="subcellular location">
    <subcellularLocation>
        <location evidence="1">Cytoplasm</location>
    </subcellularLocation>
</comment>
<comment type="similarity">
    <text evidence="1">Belongs to the urease beta subunit family.</text>
</comment>
<evidence type="ECO:0000255" key="1">
    <source>
        <dbReference type="HAMAP-Rule" id="MF_01954"/>
    </source>
</evidence>
<keyword id="KW-0963">Cytoplasm</keyword>
<keyword id="KW-0378">Hydrolase</keyword>
<keyword id="KW-1185">Reference proteome</keyword>
<name>URE2_MYCMM</name>